<dbReference type="EMBL" id="CP001146">
    <property type="protein sequence ID" value="ACI19788.1"/>
    <property type="molecule type" value="Genomic_DNA"/>
</dbReference>
<dbReference type="RefSeq" id="WP_012548420.1">
    <property type="nucleotide sequence ID" value="NC_011297.1"/>
</dbReference>
<dbReference type="SMR" id="B5YBQ1"/>
<dbReference type="STRING" id="309799.DICTH_1861"/>
<dbReference type="PaxDb" id="309799-DICTH_1861"/>
<dbReference type="KEGG" id="dth:DICTH_1861"/>
<dbReference type="eggNOG" id="COG0711">
    <property type="taxonomic scope" value="Bacteria"/>
</dbReference>
<dbReference type="HOGENOM" id="CLU_1132188_0_0_0"/>
<dbReference type="OrthoDB" id="9812939at2"/>
<dbReference type="Proteomes" id="UP000001733">
    <property type="component" value="Chromosome"/>
</dbReference>
<dbReference type="GO" id="GO:0005886">
    <property type="term" value="C:plasma membrane"/>
    <property type="evidence" value="ECO:0007669"/>
    <property type="project" value="UniProtKB-SubCell"/>
</dbReference>
<dbReference type="GO" id="GO:0045259">
    <property type="term" value="C:proton-transporting ATP synthase complex"/>
    <property type="evidence" value="ECO:0007669"/>
    <property type="project" value="UniProtKB-KW"/>
</dbReference>
<dbReference type="GO" id="GO:0046933">
    <property type="term" value="F:proton-transporting ATP synthase activity, rotational mechanism"/>
    <property type="evidence" value="ECO:0007669"/>
    <property type="project" value="UniProtKB-UniRule"/>
</dbReference>
<dbReference type="GO" id="GO:0046961">
    <property type="term" value="F:proton-transporting ATPase activity, rotational mechanism"/>
    <property type="evidence" value="ECO:0007669"/>
    <property type="project" value="TreeGrafter"/>
</dbReference>
<dbReference type="CDD" id="cd06503">
    <property type="entry name" value="ATP-synt_Fo_b"/>
    <property type="match status" value="1"/>
</dbReference>
<dbReference type="Gene3D" id="1.20.5.620">
    <property type="entry name" value="F1F0 ATP synthase subunit B, membrane domain"/>
    <property type="match status" value="1"/>
</dbReference>
<dbReference type="HAMAP" id="MF_01398">
    <property type="entry name" value="ATP_synth_b_bprime"/>
    <property type="match status" value="1"/>
</dbReference>
<dbReference type="InterPro" id="IPR028987">
    <property type="entry name" value="ATP_synth_B-like_membr_sf"/>
</dbReference>
<dbReference type="InterPro" id="IPR002146">
    <property type="entry name" value="ATP_synth_b/b'su_bac/chlpt"/>
</dbReference>
<dbReference type="InterPro" id="IPR005864">
    <property type="entry name" value="ATP_synth_F0_bsu_bac"/>
</dbReference>
<dbReference type="InterPro" id="IPR050059">
    <property type="entry name" value="ATP_synthase_B_chain"/>
</dbReference>
<dbReference type="NCBIfam" id="TIGR01144">
    <property type="entry name" value="ATP_synt_b"/>
    <property type="match status" value="1"/>
</dbReference>
<dbReference type="PANTHER" id="PTHR33445:SF1">
    <property type="entry name" value="ATP SYNTHASE SUBUNIT B"/>
    <property type="match status" value="1"/>
</dbReference>
<dbReference type="PANTHER" id="PTHR33445">
    <property type="entry name" value="ATP SYNTHASE SUBUNIT B', CHLOROPLASTIC"/>
    <property type="match status" value="1"/>
</dbReference>
<dbReference type="Pfam" id="PF00430">
    <property type="entry name" value="ATP-synt_B"/>
    <property type="match status" value="1"/>
</dbReference>
<dbReference type="SUPFAM" id="SSF81573">
    <property type="entry name" value="F1F0 ATP synthase subunit B, membrane domain"/>
    <property type="match status" value="1"/>
</dbReference>
<name>ATPF_DICT6</name>
<proteinExistence type="inferred from homology"/>
<feature type="chain" id="PRO_0000368464" description="ATP synthase subunit b">
    <location>
        <begin position="1"/>
        <end position="245"/>
    </location>
</feature>
<feature type="transmembrane region" description="Helical" evidence="1">
    <location>
        <begin position="3"/>
        <end position="23"/>
    </location>
</feature>
<protein>
    <recommendedName>
        <fullName evidence="1">ATP synthase subunit b</fullName>
    </recommendedName>
    <alternativeName>
        <fullName evidence="1">ATP synthase F(0) sector subunit b</fullName>
    </alternativeName>
    <alternativeName>
        <fullName evidence="1">ATPase subunit I</fullName>
    </alternativeName>
    <alternativeName>
        <fullName evidence="1">F-type ATPase subunit b</fullName>
        <shortName evidence="1">F-ATPase subunit b</shortName>
    </alternativeName>
</protein>
<gene>
    <name evidence="1" type="primary">atpF</name>
    <name type="ordered locus">DICTH_1861</name>
</gene>
<evidence type="ECO:0000255" key="1">
    <source>
        <dbReference type="HAMAP-Rule" id="MF_01398"/>
    </source>
</evidence>
<organism>
    <name type="scientific">Dictyoglomus thermophilum (strain ATCC 35947 / DSM 3960 / H-6-12)</name>
    <dbReference type="NCBI Taxonomy" id="309799"/>
    <lineage>
        <taxon>Bacteria</taxon>
        <taxon>Pseudomonadati</taxon>
        <taxon>Dictyoglomota</taxon>
        <taxon>Dictyoglomia</taxon>
        <taxon>Dictyoglomales</taxon>
        <taxon>Dictyoglomaceae</taxon>
        <taxon>Dictyoglomus</taxon>
    </lineage>
</organism>
<accession>B5YBQ1</accession>
<keyword id="KW-0066">ATP synthesis</keyword>
<keyword id="KW-0997">Cell inner membrane</keyword>
<keyword id="KW-1003">Cell membrane</keyword>
<keyword id="KW-0138">CF(0)</keyword>
<keyword id="KW-0375">Hydrogen ion transport</keyword>
<keyword id="KW-0406">Ion transport</keyword>
<keyword id="KW-0472">Membrane</keyword>
<keyword id="KW-0812">Transmembrane</keyword>
<keyword id="KW-1133">Transmembrane helix</keyword>
<keyword id="KW-0813">Transport</keyword>
<comment type="function">
    <text evidence="1">F(1)F(0) ATP synthase produces ATP from ADP in the presence of a proton or sodium gradient. F-type ATPases consist of two structural domains, F(1) containing the extramembraneous catalytic core and F(0) containing the membrane proton channel, linked together by a central stalk and a peripheral stalk. During catalysis, ATP synthesis in the catalytic domain of F(1) is coupled via a rotary mechanism of the central stalk subunits to proton translocation.</text>
</comment>
<comment type="function">
    <text evidence="1">Component of the F(0) channel, it forms part of the peripheral stalk, linking F(1) to F(0).</text>
</comment>
<comment type="subunit">
    <text evidence="1">F-type ATPases have 2 components, F(1) - the catalytic core - and F(0) - the membrane proton channel. F(1) has five subunits: alpha(3), beta(3), gamma(1), delta(1), epsilon(1). F(0) has three main subunits: a(1), b(2) and c(10-14). The alpha and beta chains form an alternating ring which encloses part of the gamma chain. F(1) is attached to F(0) by a central stalk formed by the gamma and epsilon chains, while a peripheral stalk is formed by the delta and b chains.</text>
</comment>
<comment type="subcellular location">
    <subcellularLocation>
        <location evidence="1">Cell inner membrane</location>
        <topology evidence="1">Single-pass membrane protein</topology>
    </subcellularLocation>
</comment>
<comment type="similarity">
    <text evidence="1">Belongs to the ATPase B chain family.</text>
</comment>
<reference key="1">
    <citation type="journal article" date="2014" name="Genome Announc.">
        <title>Complete Genome Sequence of the Extreme Thermophile Dictyoglomus thermophilum H-6-12.</title>
        <authorList>
            <person name="Coil D.A."/>
            <person name="Badger J.H."/>
            <person name="Forberger H.C."/>
            <person name="Riggs F."/>
            <person name="Madupu R."/>
            <person name="Fedorova N."/>
            <person name="Ward N."/>
            <person name="Robb F.T."/>
            <person name="Eisen J.A."/>
        </authorList>
    </citation>
    <scope>NUCLEOTIDE SEQUENCE [LARGE SCALE GENOMIC DNA]</scope>
    <source>
        <strain>ATCC 35947 / DSM 3960 / H-6-12</strain>
    </source>
</reference>
<sequence length="245" mass="28225">MFSFNLLTIVSSIVNLLALAWIIKRYFLGAIIRIMNERREKIEAAMKEAEKKLQEAEDLRKQREAQLAQARDEAAKIIKEAVDTAEKMKRDITAKAEEEAEKIIVKAHEIATAERKRVLETAKKEVLAFSRLIIKEFFKRFLPVEAEELLISQFAESLDSAIANIKSDNIEEVKFISPDNVSSQLKKKIEDKLRSLLPGNWKFIFDVDPSIGLGFKLFIGEFLIDHSLDYHLSQIYETIREVENI</sequence>